<proteinExistence type="evidence at transcript level"/>
<gene>
    <name type="primary">GNAO1</name>
    <name type="synonym">GNA0</name>
    <name type="synonym">GNAO</name>
</gene>
<feature type="initiator methionine" description="Removed" evidence="2">
    <location>
        <position position="1"/>
    </location>
</feature>
<feature type="chain" id="PRO_0000203700" description="Guanine nucleotide-binding protein G(o) subunit alpha">
    <location>
        <begin position="2"/>
        <end position="354"/>
    </location>
</feature>
<feature type="domain" description="G-alpha" evidence="6">
    <location>
        <begin position="32"/>
        <end position="354"/>
    </location>
</feature>
<feature type="region of interest" description="G1 motif" evidence="6">
    <location>
        <begin position="35"/>
        <end position="48"/>
    </location>
</feature>
<feature type="region of interest" description="G2 motif" evidence="6">
    <location>
        <begin position="174"/>
        <end position="182"/>
    </location>
</feature>
<feature type="region of interest" description="G3 motif" evidence="6">
    <location>
        <begin position="197"/>
        <end position="206"/>
    </location>
</feature>
<feature type="region of interest" description="G4 motif" evidence="6">
    <location>
        <begin position="266"/>
        <end position="273"/>
    </location>
</feature>
<feature type="region of interest" description="G5 motif" evidence="6">
    <location>
        <begin position="324"/>
        <end position="329"/>
    </location>
</feature>
<feature type="binding site" evidence="4">
    <location>
        <position position="43"/>
    </location>
    <ligand>
        <name>GTP</name>
        <dbReference type="ChEBI" id="CHEBI:37565"/>
    </ligand>
</feature>
<feature type="binding site" evidence="4">
    <location>
        <position position="46"/>
    </location>
    <ligand>
        <name>GTP</name>
        <dbReference type="ChEBI" id="CHEBI:37565"/>
    </ligand>
</feature>
<feature type="binding site" evidence="4">
    <location>
        <position position="47"/>
    </location>
    <ligand>
        <name>GTP</name>
        <dbReference type="ChEBI" id="CHEBI:37565"/>
    </ligand>
</feature>
<feature type="binding site" evidence="4">
    <location>
        <position position="47"/>
    </location>
    <ligand>
        <name>Mg(2+)</name>
        <dbReference type="ChEBI" id="CHEBI:18420"/>
    </ligand>
</feature>
<feature type="binding site" evidence="4">
    <location>
        <position position="48"/>
    </location>
    <ligand>
        <name>GTP</name>
        <dbReference type="ChEBI" id="CHEBI:37565"/>
    </ligand>
</feature>
<feature type="binding site" evidence="4">
    <location>
        <position position="152"/>
    </location>
    <ligand>
        <name>GTP</name>
        <dbReference type="ChEBI" id="CHEBI:37565"/>
    </ligand>
</feature>
<feature type="binding site" evidence="4">
    <location>
        <position position="176"/>
    </location>
    <ligand>
        <name>GTP</name>
        <dbReference type="ChEBI" id="CHEBI:37565"/>
    </ligand>
</feature>
<feature type="binding site" evidence="4">
    <location>
        <position position="177"/>
    </location>
    <ligand>
        <name>GTP</name>
        <dbReference type="ChEBI" id="CHEBI:37565"/>
    </ligand>
</feature>
<feature type="binding site" evidence="4">
    <location>
        <position position="178"/>
    </location>
    <ligand>
        <name>GTP</name>
        <dbReference type="ChEBI" id="CHEBI:37565"/>
    </ligand>
</feature>
<feature type="binding site" evidence="4">
    <location>
        <position position="179"/>
    </location>
    <ligand>
        <name>GTP</name>
        <dbReference type="ChEBI" id="CHEBI:37565"/>
    </ligand>
</feature>
<feature type="binding site" evidence="4">
    <location>
        <position position="182"/>
    </location>
    <ligand>
        <name>Mg(2+)</name>
        <dbReference type="ChEBI" id="CHEBI:18420"/>
    </ligand>
</feature>
<feature type="binding site" evidence="4">
    <location>
        <position position="270"/>
    </location>
    <ligand>
        <name>GTP</name>
        <dbReference type="ChEBI" id="CHEBI:37565"/>
    </ligand>
</feature>
<feature type="binding site" evidence="4">
    <location>
        <position position="273"/>
    </location>
    <ligand>
        <name>GTP</name>
        <dbReference type="ChEBI" id="CHEBI:37565"/>
    </ligand>
</feature>
<feature type="binding site" evidence="4">
    <location>
        <position position="325"/>
    </location>
    <ligand>
        <name>GTP</name>
        <dbReference type="ChEBI" id="CHEBI:37565"/>
    </ligand>
</feature>
<feature type="modified residue" description="5-glutamyl histamine" evidence="4">
    <location>
        <position position="205"/>
    </location>
</feature>
<feature type="modified residue" description="Deamidated asparagine; in form Alpha-3" evidence="1">
    <location>
        <position position="346"/>
    </location>
</feature>
<feature type="lipid moiety-binding region" description="N-myristoyl glycine" evidence="3">
    <location>
        <position position="2"/>
    </location>
</feature>
<feature type="lipid moiety-binding region" description="S-palmitoyl cysteine" evidence="1">
    <location>
        <position position="3"/>
    </location>
</feature>
<feature type="lipid moiety-binding region" description="S-palmitoyl cysteine" evidence="4">
    <location>
        <position position="351"/>
    </location>
</feature>
<feature type="splice variant" id="VSP_031249" description="In isoform Alpha-2." evidence="7">
    <original>MLFDSICNNKFFIDTSIILFLNKKDLFGEKIKKSPLTICFPEYPGSNTYEDAAAYIQTQFESKNRSPNKEIYCHMTCATDTNNIQVVFDAVTDIIIANNLRGCGLY</original>
    <variation>KLFDSICNNKWFTDTSIILFLNKKDIFEEKITRSPLTICFPEYTGPSAFTEAVAHIQGQYESKNKSAHKEIYTHFTCATDTNNIQFVFDAVTDVIIAKNLRGCGLY</variation>
    <location>
        <begin position="249"/>
        <end position="354"/>
    </location>
</feature>
<name>GNAO_CRILO</name>
<accession>P59216</accession>
<accession>P04900</accession>
<accession>P17806</accession>
<evidence type="ECO:0000250" key="1"/>
<evidence type="ECO:0000250" key="2">
    <source>
        <dbReference type="UniProtKB" id="P08239"/>
    </source>
</evidence>
<evidence type="ECO:0000250" key="3">
    <source>
        <dbReference type="UniProtKB" id="P09471"/>
    </source>
</evidence>
<evidence type="ECO:0000250" key="4">
    <source>
        <dbReference type="UniProtKB" id="P18872"/>
    </source>
</evidence>
<evidence type="ECO:0000250" key="5">
    <source>
        <dbReference type="UniProtKB" id="P59215"/>
    </source>
</evidence>
<evidence type="ECO:0000255" key="6">
    <source>
        <dbReference type="PROSITE-ProRule" id="PRU01230"/>
    </source>
</evidence>
<evidence type="ECO:0000303" key="7">
    <source>
    </source>
</evidence>
<evidence type="ECO:0000305" key="8"/>
<keyword id="KW-0025">Alternative splicing</keyword>
<keyword id="KW-1003">Cell membrane</keyword>
<keyword id="KW-0342">GTP-binding</keyword>
<keyword id="KW-0378">Hydrolase</keyword>
<keyword id="KW-0449">Lipoprotein</keyword>
<keyword id="KW-0460">Magnesium</keyword>
<keyword id="KW-0472">Membrane</keyword>
<keyword id="KW-0479">Metal-binding</keyword>
<keyword id="KW-0519">Myristate</keyword>
<keyword id="KW-0547">Nucleotide-binding</keyword>
<keyword id="KW-0564">Palmitate</keyword>
<keyword id="KW-0807">Transducer</keyword>
<dbReference type="EC" id="3.6.5.-" evidence="4"/>
<dbReference type="EMBL" id="M33661">
    <property type="protein sequence ID" value="AAA36987.1"/>
    <property type="molecule type" value="mRNA"/>
</dbReference>
<dbReference type="EMBL" id="M33662">
    <property type="protein sequence ID" value="AAA36988.1"/>
    <property type="molecule type" value="mRNA"/>
</dbReference>
<dbReference type="SMR" id="P59216"/>
<dbReference type="GO" id="GO:0005737">
    <property type="term" value="C:cytoplasm"/>
    <property type="evidence" value="ECO:0007669"/>
    <property type="project" value="TreeGrafter"/>
</dbReference>
<dbReference type="GO" id="GO:0005834">
    <property type="term" value="C:heterotrimeric G-protein complex"/>
    <property type="evidence" value="ECO:0007669"/>
    <property type="project" value="TreeGrafter"/>
</dbReference>
<dbReference type="GO" id="GO:0051430">
    <property type="term" value="F:corticotropin-releasing hormone receptor 1 binding"/>
    <property type="evidence" value="ECO:0007669"/>
    <property type="project" value="TreeGrafter"/>
</dbReference>
<dbReference type="GO" id="GO:0031821">
    <property type="term" value="F:G protein-coupled serotonin receptor binding"/>
    <property type="evidence" value="ECO:0007669"/>
    <property type="project" value="TreeGrafter"/>
</dbReference>
<dbReference type="GO" id="GO:0031683">
    <property type="term" value="F:G-protein beta/gamma-subunit complex binding"/>
    <property type="evidence" value="ECO:0007669"/>
    <property type="project" value="InterPro"/>
</dbReference>
<dbReference type="GO" id="GO:0005525">
    <property type="term" value="F:GTP binding"/>
    <property type="evidence" value="ECO:0007669"/>
    <property type="project" value="UniProtKB-KW"/>
</dbReference>
<dbReference type="GO" id="GO:0003924">
    <property type="term" value="F:GTPase activity"/>
    <property type="evidence" value="ECO:0007669"/>
    <property type="project" value="InterPro"/>
</dbReference>
<dbReference type="GO" id="GO:0046872">
    <property type="term" value="F:metal ion binding"/>
    <property type="evidence" value="ECO:0007669"/>
    <property type="project" value="UniProtKB-KW"/>
</dbReference>
<dbReference type="GO" id="GO:0031852">
    <property type="term" value="F:mu-type opioid receptor binding"/>
    <property type="evidence" value="ECO:0007669"/>
    <property type="project" value="TreeGrafter"/>
</dbReference>
<dbReference type="GO" id="GO:0007188">
    <property type="term" value="P:adenylate cyclase-modulating G protein-coupled receptor signaling pathway"/>
    <property type="evidence" value="ECO:0007669"/>
    <property type="project" value="InterPro"/>
</dbReference>
<dbReference type="GO" id="GO:0007212">
    <property type="term" value="P:G protein-coupled dopamine receptor signaling pathway"/>
    <property type="evidence" value="ECO:0007669"/>
    <property type="project" value="TreeGrafter"/>
</dbReference>
<dbReference type="CDD" id="cd00066">
    <property type="entry name" value="G-alpha"/>
    <property type="match status" value="1"/>
</dbReference>
<dbReference type="FunFam" id="3.40.50.300:FF:003559">
    <property type="entry name" value="Guanine nucleotide-binding protein G(i) subunit alpha-1"/>
    <property type="match status" value="1"/>
</dbReference>
<dbReference type="FunFam" id="3.40.50.300:FF:002307">
    <property type="entry name" value="Guanine nucleotide-binding protein G(k) subunit alpha"/>
    <property type="match status" value="1"/>
</dbReference>
<dbReference type="FunFam" id="1.10.400.10:FF:000020">
    <property type="entry name" value="Guanine nucleotide-binding protein G(o) subunit alpha"/>
    <property type="match status" value="1"/>
</dbReference>
<dbReference type="Gene3D" id="1.10.400.10">
    <property type="entry name" value="GI Alpha 1, domain 2-like"/>
    <property type="match status" value="1"/>
</dbReference>
<dbReference type="Gene3D" id="3.40.50.300">
    <property type="entry name" value="P-loop containing nucleotide triphosphate hydrolases"/>
    <property type="match status" value="1"/>
</dbReference>
<dbReference type="InterPro" id="IPR001408">
    <property type="entry name" value="Gprotein_alpha_I"/>
</dbReference>
<dbReference type="InterPro" id="IPR001019">
    <property type="entry name" value="Gprotein_alpha_su"/>
</dbReference>
<dbReference type="InterPro" id="IPR011025">
    <property type="entry name" value="GproteinA_insert"/>
</dbReference>
<dbReference type="InterPro" id="IPR027417">
    <property type="entry name" value="P-loop_NTPase"/>
</dbReference>
<dbReference type="PANTHER" id="PTHR10218">
    <property type="entry name" value="GTP-BINDING PROTEIN ALPHA SUBUNIT"/>
    <property type="match status" value="1"/>
</dbReference>
<dbReference type="PANTHER" id="PTHR10218:SF361">
    <property type="entry name" value="GUANINE NUCLEOTIDE-BINDING PROTEIN G(O) SUBUNIT ALPHA"/>
    <property type="match status" value="1"/>
</dbReference>
<dbReference type="Pfam" id="PF00503">
    <property type="entry name" value="G-alpha"/>
    <property type="match status" value="1"/>
</dbReference>
<dbReference type="PRINTS" id="PR00318">
    <property type="entry name" value="GPROTEINA"/>
</dbReference>
<dbReference type="PRINTS" id="PR00441">
    <property type="entry name" value="GPROTEINAI"/>
</dbReference>
<dbReference type="SMART" id="SM00275">
    <property type="entry name" value="G_alpha"/>
    <property type="match status" value="1"/>
</dbReference>
<dbReference type="SUPFAM" id="SSF52540">
    <property type="entry name" value="P-loop containing nucleoside triphosphate hydrolases"/>
    <property type="match status" value="1"/>
</dbReference>
<dbReference type="SUPFAM" id="SSF47895">
    <property type="entry name" value="Transducin (alpha subunit), insertion domain"/>
    <property type="match status" value="1"/>
</dbReference>
<dbReference type="PROSITE" id="PS51882">
    <property type="entry name" value="G_ALPHA"/>
    <property type="match status" value="1"/>
</dbReference>
<protein>
    <recommendedName>
        <fullName>Guanine nucleotide-binding protein G(o) subunit alpha</fullName>
        <ecNumber evidence="4">3.6.5.-</ecNumber>
    </recommendedName>
</protein>
<organism>
    <name type="scientific">Cricetulus longicaudatus</name>
    <name type="common">Long-tailed dwarf hamster</name>
    <dbReference type="NCBI Taxonomy" id="10030"/>
    <lineage>
        <taxon>Eukaryota</taxon>
        <taxon>Metazoa</taxon>
        <taxon>Chordata</taxon>
        <taxon>Craniata</taxon>
        <taxon>Vertebrata</taxon>
        <taxon>Euteleostomi</taxon>
        <taxon>Mammalia</taxon>
        <taxon>Eutheria</taxon>
        <taxon>Euarchontoglires</taxon>
        <taxon>Glires</taxon>
        <taxon>Rodentia</taxon>
        <taxon>Myomorpha</taxon>
        <taxon>Muroidea</taxon>
        <taxon>Cricetidae</taxon>
        <taxon>Cricetinae</taxon>
        <taxon>Cricetulus</taxon>
    </lineage>
</organism>
<reference key="1">
    <citation type="journal article" date="1990" name="J. Biol. Chem.">
        <title>Molecular cloning of a novel splice variant of the alpha subunit of the mammalian Go protein.</title>
        <authorList>
            <person name="Hsu W.H."/>
            <person name="Rudolph U."/>
            <person name="Sanford J."/>
            <person name="Bertrand P."/>
            <person name="Olate J."/>
            <person name="Nelson C."/>
            <person name="Moss L.G."/>
            <person name="Boyd A.E. III"/>
            <person name="Codina J."/>
            <person name="Birnbaumer L."/>
        </authorList>
    </citation>
    <scope>NUCLEOTIDE SEQUENCE [MRNA] (ISOFORMS ALPHA-1 AND ALPHA-2)</scope>
</reference>
<comment type="function">
    <text evidence="4">Guanine nucleotide-binding proteins (G proteins) function as transducers downstream of G protein-coupled receptors (GPCRs) in numerous signaling cascades. The alpha chain contains the guanine nucleotide binding site and alternates between an active, GTP-bound state and an inactive, GDP-bound state. Signaling by an activated GPCR promotes GDP release and GTP binding. The alpha subunit has a low GTPase activity that converts bound GTP to GDP, thereby terminating the signal. Both GDP release and GTP hydrolysis are modulated by numerous regulatory proteins. Signaling is mediated via effector proteins, such as adenylate cyclase. Inhibits adenylate cyclase activity, leading to decreased intracellular cAMP levels.</text>
</comment>
<comment type="catalytic activity">
    <reaction evidence="4">
        <text>GTP + H2O = GDP + phosphate + H(+)</text>
        <dbReference type="Rhea" id="RHEA:19669"/>
        <dbReference type="ChEBI" id="CHEBI:15377"/>
        <dbReference type="ChEBI" id="CHEBI:15378"/>
        <dbReference type="ChEBI" id="CHEBI:37565"/>
        <dbReference type="ChEBI" id="CHEBI:43474"/>
        <dbReference type="ChEBI" id="CHEBI:58189"/>
    </reaction>
    <physiologicalReaction direction="left-to-right" evidence="4">
        <dbReference type="Rhea" id="RHEA:19670"/>
    </physiologicalReaction>
</comment>
<comment type="activity regulation">
    <text evidence="4">The GTPase activity is promoted by GTPAse activators, such as RGS14, RGS16 and RGS19.</text>
</comment>
<comment type="subunit">
    <text evidence="3 4">G proteins are composed of 3 units; alpha, beta and gamma. The alpha chain contains the guanine nucleotide binding site. Forms a complex with GNB1 and GNG3 (By similarity). Interacts with RGS14. Interacts with RGS16 (By similarity). Interacts with RGS19 (By similarity). Interacts (when palmitoylated) with ADGRG3 (By similarity).</text>
</comment>
<comment type="subcellular location">
    <subcellularLocation>
        <location evidence="4">Cell membrane</location>
    </subcellularLocation>
    <subcellularLocation>
        <location evidence="3">Membrane</location>
        <topology evidence="3">Lipid-anchor</topology>
    </subcellularLocation>
</comment>
<comment type="alternative products">
    <event type="alternative splicing"/>
    <isoform>
        <id>P59216-1</id>
        <name>Alpha-1</name>
        <sequence type="displayed"/>
    </isoform>
    <isoform>
        <id>P59216-2</id>
        <id>P17806-1</id>
        <name>Alpha-2</name>
        <sequence type="described" ref="VSP_031249"/>
    </isoform>
</comment>
<comment type="PTM">
    <text evidence="5">Deamidation of Asn-346 converts alpha-1 to alpha-3.</text>
</comment>
<comment type="PTM">
    <text evidence="4">Histaminylated at Gln-205 residues by TGM2.</text>
</comment>
<comment type="similarity">
    <text evidence="8">Belongs to the G-alpha family. G(i/o/t/z) subfamily.</text>
</comment>
<sequence length="354" mass="40069">MGCTLSAEERAALERSKAIEKNLKEDGISAAKDVKLLLLGAGESGKSTIVKQMKIIHEDGFSGEDVKQYKPVVYSNTIQSLAAIVRAMDTLGVEYGDKERKADSKMVCDVVSRMEDTEPFSAELLSAMMRLWGDSGIQECFNRSREYQLNDSAKYYLDSLDRIGAADYQPTEQDILRTRVKTTGIVETHFTFKNLHFRLFDVGGQRSERKKWIHCFEDVTAIIFCVALSGYDQVLHEDETTNRMHESLMLFDSICNNKFFIDTSIILFLNKKDLFGEKIKKSPLTICFPEYPGSNTYEDAAAYIQTQFESKNRSPNKEIYCHMTCATDTNNIQVVFDAVTDIIIANNLRGCGLY</sequence>